<organism>
    <name type="scientific">Sulfolobus acidocaldarius (strain ATCC 33909 / DSM 639 / JCM 8929 / NBRC 15157 / NCIMB 11770)</name>
    <dbReference type="NCBI Taxonomy" id="330779"/>
    <lineage>
        <taxon>Archaea</taxon>
        <taxon>Thermoproteota</taxon>
        <taxon>Thermoprotei</taxon>
        <taxon>Sulfolobales</taxon>
        <taxon>Sulfolobaceae</taxon>
        <taxon>Sulfolobus</taxon>
    </lineage>
</organism>
<protein>
    <recommendedName>
        <fullName evidence="1">Isoleucine--tRNA ligase</fullName>
        <ecNumber evidence="1">6.1.1.5</ecNumber>
    </recommendedName>
    <alternativeName>
        <fullName evidence="1">Isoleucyl-tRNA synthetase</fullName>
        <shortName evidence="1">IleRS</shortName>
    </alternativeName>
</protein>
<keyword id="KW-0030">Aminoacyl-tRNA synthetase</keyword>
<keyword id="KW-0067">ATP-binding</keyword>
<keyword id="KW-0963">Cytoplasm</keyword>
<keyword id="KW-0436">Ligase</keyword>
<keyword id="KW-0479">Metal-binding</keyword>
<keyword id="KW-0547">Nucleotide-binding</keyword>
<keyword id="KW-0648">Protein biosynthesis</keyword>
<keyword id="KW-1185">Reference proteome</keyword>
<keyword id="KW-0862">Zinc</keyword>
<gene>
    <name evidence="1" type="primary">ileS</name>
    <name type="ordered locus">Saci_0599</name>
</gene>
<comment type="function">
    <text evidence="1">Catalyzes the attachment of isoleucine to tRNA(Ile). As IleRS can inadvertently accommodate and process structurally similar amino acids such as valine, to avoid such errors it has two additional distinct tRNA(Ile)-dependent editing activities. One activity is designated as 'pretransfer' editing and involves the hydrolysis of activated Val-AMP. The other activity is designated 'posttransfer' editing and involves deacylation of mischarged Val-tRNA(Ile).</text>
</comment>
<comment type="catalytic activity">
    <reaction evidence="1">
        <text>tRNA(Ile) + L-isoleucine + ATP = L-isoleucyl-tRNA(Ile) + AMP + diphosphate</text>
        <dbReference type="Rhea" id="RHEA:11060"/>
        <dbReference type="Rhea" id="RHEA-COMP:9666"/>
        <dbReference type="Rhea" id="RHEA-COMP:9695"/>
        <dbReference type="ChEBI" id="CHEBI:30616"/>
        <dbReference type="ChEBI" id="CHEBI:33019"/>
        <dbReference type="ChEBI" id="CHEBI:58045"/>
        <dbReference type="ChEBI" id="CHEBI:78442"/>
        <dbReference type="ChEBI" id="CHEBI:78528"/>
        <dbReference type="ChEBI" id="CHEBI:456215"/>
        <dbReference type="EC" id="6.1.1.5"/>
    </reaction>
</comment>
<comment type="cofactor">
    <cofactor evidence="1">
        <name>Zn(2+)</name>
        <dbReference type="ChEBI" id="CHEBI:29105"/>
    </cofactor>
</comment>
<comment type="subunit">
    <text evidence="1">Monomer.</text>
</comment>
<comment type="subcellular location">
    <subcellularLocation>
        <location evidence="1">Cytoplasm</location>
    </subcellularLocation>
</comment>
<comment type="domain">
    <text evidence="1">IleRS has two distinct active sites: one for aminoacylation and one for editing. The misactivated valine is translocated from the active site to the editing site, which sterically excludes the correctly activated isoleucine. The single editing site contains two valyl binding pockets, one specific for each substrate (Val-AMP or Val-tRNA(Ile)).</text>
</comment>
<comment type="similarity">
    <text evidence="1">Belongs to the class-I aminoacyl-tRNA synthetase family. IleS type 2 subfamily.</text>
</comment>
<sequence length="1050" mass="122024">MTSKFDPLKFEEEVLKYWDDNNIYKKLKEINEKNHKKFLFIDGPPYPSSPIPHIGTVWNKTIKDCILRYERLMGYSVKDQPGYDTHGLPIEVETEKRLGIKSKAEIIEKVGVDNFISKCKEFAVNNSKSLTQNFRNLGIFMDWENPYFTFNNDYISNSWAVIKKAYERGLLYKGVHVLHWCSRCETTLADYEVSEYRDLEDPSIYVKFRVKGEPNRYLVIWTTTPWTLPANVFVMINKDFEYADVRVGDEILVIAKDRVKELMKEARIKEYKILRVYKGEELLGLEYEHPLADIVSAQSKINNHHKVLDGGEAVTLQEGTGLVHSAPGHGDVDFEIGKKYDMPVVMLVNDKGEFTQDSGKYAGKYVRSASEEIISDLKQRSALLHASKIVHRYPVCWRCKTPLILRAIEQWFIAVSKLKDHLMGEIDRVRWIPDWGKTRIGNMVKEVRDWVISRQRFWGTPLPIWVCSNCQNIIVVGGVDELSKISINQVPQDLHRPWIDSVVVRCEKCGGEARRISDVADVWFDSGVAFFASLGQDWRKRWSELGPVDLVLEGHDQLRGWFFSLLRTGVILMDKAPYEAVLVHGFMLDEQGREMHKSSGNYVEPSQVVSKYGRDTLRLWLLRNTTWEDAKFSWKSLDMTRRDLNIIWNVYVFANTYMSLDEFKYSKYSYNDIKDYLKLEDIWLLSRYYRMLKEVIEAMKEYKVHELANKVTAFIIDDISRFYLRVTRKRAWNEANDPDKIAMYYVLYHVLKGSLILLSTVIPFTAEKIYLDFVQERLESISMEKIPEIKEEFINSEIEEAFEVAKEIIDAGLNARAKAGIKLRWPLKEVYVFLVSDKDRRSIEKITDVLSSLLNSKSIIIEGIDGYKRFSKIRATPNTGSIGPTFKRLSVKVAEYIQNNSDKVAQDIVSKGYHEFNVDSENLRLDISHVNLVEEVEKGYVSARFSKGVVLLKQEMSKEEEEEGIIRDLIRRIQFMRKQLSLNVNEYILLSIRAPDDKVDLIKKWEQYIKNETRAKELRIGDVSGDLIQDWDVEEETYTIGVSKADVSVS</sequence>
<accession>P46215</accession>
<accession>Q4JB38</accession>
<dbReference type="EC" id="6.1.1.5" evidence="1"/>
<dbReference type="EMBL" id="CP000077">
    <property type="protein sequence ID" value="AAY79991.1"/>
    <property type="molecule type" value="Genomic_DNA"/>
</dbReference>
<dbReference type="EMBL" id="L37106">
    <property type="protein sequence ID" value="AAC41447.1"/>
    <property type="molecule type" value="Genomic_DNA"/>
</dbReference>
<dbReference type="RefSeq" id="WP_011277493.1">
    <property type="nucleotide sequence ID" value="NC_007181.1"/>
</dbReference>
<dbReference type="SMR" id="P46215"/>
<dbReference type="STRING" id="330779.Saci_0599"/>
<dbReference type="GeneID" id="14551120"/>
<dbReference type="GeneID" id="78440942"/>
<dbReference type="KEGG" id="sai:Saci_0599"/>
<dbReference type="PATRIC" id="fig|330779.12.peg.578"/>
<dbReference type="eggNOG" id="arCOG00807">
    <property type="taxonomic scope" value="Archaea"/>
</dbReference>
<dbReference type="HOGENOM" id="CLU_001493_1_1_2"/>
<dbReference type="Proteomes" id="UP000001018">
    <property type="component" value="Chromosome"/>
</dbReference>
<dbReference type="GO" id="GO:0005737">
    <property type="term" value="C:cytoplasm"/>
    <property type="evidence" value="ECO:0007669"/>
    <property type="project" value="UniProtKB-SubCell"/>
</dbReference>
<dbReference type="GO" id="GO:0002161">
    <property type="term" value="F:aminoacyl-tRNA deacylase activity"/>
    <property type="evidence" value="ECO:0007669"/>
    <property type="project" value="InterPro"/>
</dbReference>
<dbReference type="GO" id="GO:0005524">
    <property type="term" value="F:ATP binding"/>
    <property type="evidence" value="ECO:0007669"/>
    <property type="project" value="UniProtKB-UniRule"/>
</dbReference>
<dbReference type="GO" id="GO:0004822">
    <property type="term" value="F:isoleucine-tRNA ligase activity"/>
    <property type="evidence" value="ECO:0007669"/>
    <property type="project" value="UniProtKB-UniRule"/>
</dbReference>
<dbReference type="GO" id="GO:0000049">
    <property type="term" value="F:tRNA binding"/>
    <property type="evidence" value="ECO:0007669"/>
    <property type="project" value="InterPro"/>
</dbReference>
<dbReference type="GO" id="GO:0008270">
    <property type="term" value="F:zinc ion binding"/>
    <property type="evidence" value="ECO:0007669"/>
    <property type="project" value="UniProtKB-UniRule"/>
</dbReference>
<dbReference type="GO" id="GO:0006428">
    <property type="term" value="P:isoleucyl-tRNA aminoacylation"/>
    <property type="evidence" value="ECO:0007669"/>
    <property type="project" value="UniProtKB-UniRule"/>
</dbReference>
<dbReference type="CDD" id="cd07961">
    <property type="entry name" value="Anticodon_Ia_Ile_ABEc"/>
    <property type="match status" value="1"/>
</dbReference>
<dbReference type="CDD" id="cd00818">
    <property type="entry name" value="IleRS_core"/>
    <property type="match status" value="1"/>
</dbReference>
<dbReference type="FunFam" id="1.10.730.10:FF:000083">
    <property type="entry name" value="Isoleucine--tRNA ligase"/>
    <property type="match status" value="1"/>
</dbReference>
<dbReference type="Gene3D" id="3.40.50.620">
    <property type="entry name" value="HUPs"/>
    <property type="match status" value="2"/>
</dbReference>
<dbReference type="Gene3D" id="1.10.730.10">
    <property type="entry name" value="Isoleucyl-tRNA Synthetase, Domain 1"/>
    <property type="match status" value="1"/>
</dbReference>
<dbReference type="HAMAP" id="MF_02003">
    <property type="entry name" value="Ile_tRNA_synth_type2"/>
    <property type="match status" value="1"/>
</dbReference>
<dbReference type="InterPro" id="IPR001412">
    <property type="entry name" value="aa-tRNA-synth_I_CS"/>
</dbReference>
<dbReference type="InterPro" id="IPR002300">
    <property type="entry name" value="aa-tRNA-synth_Ia"/>
</dbReference>
<dbReference type="InterPro" id="IPR033709">
    <property type="entry name" value="Anticodon_Ile_ABEc"/>
</dbReference>
<dbReference type="InterPro" id="IPR002301">
    <property type="entry name" value="Ile-tRNA-ligase"/>
</dbReference>
<dbReference type="InterPro" id="IPR023586">
    <property type="entry name" value="Ile-tRNA-ligase_type2"/>
</dbReference>
<dbReference type="InterPro" id="IPR013155">
    <property type="entry name" value="M/V/L/I-tRNA-synth_anticd-bd"/>
</dbReference>
<dbReference type="InterPro" id="IPR014729">
    <property type="entry name" value="Rossmann-like_a/b/a_fold"/>
</dbReference>
<dbReference type="InterPro" id="IPR009080">
    <property type="entry name" value="tRNAsynth_Ia_anticodon-bd"/>
</dbReference>
<dbReference type="InterPro" id="IPR009008">
    <property type="entry name" value="Val/Leu/Ile-tRNA-synth_edit"/>
</dbReference>
<dbReference type="NCBIfam" id="TIGR00392">
    <property type="entry name" value="ileS"/>
    <property type="match status" value="1"/>
</dbReference>
<dbReference type="PANTHER" id="PTHR42780:SF1">
    <property type="entry name" value="ISOLEUCINE--TRNA LIGASE, CYTOPLASMIC"/>
    <property type="match status" value="1"/>
</dbReference>
<dbReference type="PANTHER" id="PTHR42780">
    <property type="entry name" value="SOLEUCYL-TRNA SYNTHETASE"/>
    <property type="match status" value="1"/>
</dbReference>
<dbReference type="Pfam" id="PF08264">
    <property type="entry name" value="Anticodon_1"/>
    <property type="match status" value="1"/>
</dbReference>
<dbReference type="Pfam" id="PF19302">
    <property type="entry name" value="DUF5915"/>
    <property type="match status" value="1"/>
</dbReference>
<dbReference type="Pfam" id="PF00133">
    <property type="entry name" value="tRNA-synt_1"/>
    <property type="match status" value="1"/>
</dbReference>
<dbReference type="PRINTS" id="PR00984">
    <property type="entry name" value="TRNASYNTHILE"/>
</dbReference>
<dbReference type="SUPFAM" id="SSF47323">
    <property type="entry name" value="Anticodon-binding domain of a subclass of class I aminoacyl-tRNA synthetases"/>
    <property type="match status" value="2"/>
</dbReference>
<dbReference type="SUPFAM" id="SSF52374">
    <property type="entry name" value="Nucleotidylyl transferase"/>
    <property type="match status" value="1"/>
</dbReference>
<dbReference type="SUPFAM" id="SSF50677">
    <property type="entry name" value="ValRS/IleRS/LeuRS editing domain"/>
    <property type="match status" value="1"/>
</dbReference>
<dbReference type="PROSITE" id="PS00178">
    <property type="entry name" value="AA_TRNA_LIGASE_I"/>
    <property type="match status" value="1"/>
</dbReference>
<reference key="1">
    <citation type="journal article" date="2005" name="J. Bacteriol.">
        <title>The genome of Sulfolobus acidocaldarius, a model organism of the Crenarchaeota.</title>
        <authorList>
            <person name="Chen L."/>
            <person name="Bruegger K."/>
            <person name="Skovgaard M."/>
            <person name="Redder P."/>
            <person name="She Q."/>
            <person name="Torarinsson E."/>
            <person name="Greve B."/>
            <person name="Awayez M."/>
            <person name="Zibat A."/>
            <person name="Klenk H.-P."/>
            <person name="Garrett R.A."/>
        </authorList>
    </citation>
    <scope>NUCLEOTIDE SEQUENCE [LARGE SCALE GENOMIC DNA]</scope>
    <source>
        <strain>ATCC 33909 / DSM 639 / JCM 8929 / NBRC 15157 / NCIMB 11770</strain>
    </source>
</reference>
<reference key="2">
    <citation type="journal article" date="1995" name="Proc. Natl. Acad. Sci. U.S.A.">
        <title>Root of the universal tree of life based on ancient aminoacyl-tRNA synthetase gene duplications.</title>
        <authorList>
            <person name="Brown J.R."/>
            <person name="Doolittle W.F."/>
        </authorList>
    </citation>
    <scope>NUCLEOTIDE SEQUENCE [GENOMIC DNA] OF 84-636</scope>
</reference>
<evidence type="ECO:0000255" key="1">
    <source>
        <dbReference type="HAMAP-Rule" id="MF_02003"/>
    </source>
</evidence>
<evidence type="ECO:0000305" key="2"/>
<proteinExistence type="inferred from homology"/>
<feature type="chain" id="PRO_0000098592" description="Isoleucine--tRNA ligase">
    <location>
        <begin position="1"/>
        <end position="1050"/>
    </location>
</feature>
<feature type="short sequence motif" description="'HIGH' region">
    <location>
        <begin position="45"/>
        <end position="56"/>
    </location>
</feature>
<feature type="short sequence motif" description="'KMSKS' region">
    <location>
        <begin position="594"/>
        <end position="598"/>
    </location>
</feature>
<feature type="binding site" evidence="1">
    <location>
        <position position="597"/>
    </location>
    <ligand>
        <name>ATP</name>
        <dbReference type="ChEBI" id="CHEBI:30616"/>
    </ligand>
</feature>
<feature type="sequence conflict" description="In Ref. 2; AAC41447." evidence="2" ref="2">
    <original>KAYE</original>
    <variation>SIR</variation>
    <location>
        <begin position="164"/>
        <end position="167"/>
    </location>
</feature>
<feature type="sequence conflict" description="In Ref. 2; AAC41447." evidence="2" ref="2">
    <original>S</original>
    <variation>G</variation>
    <location>
        <position position="483"/>
    </location>
</feature>
<feature type="sequence conflict" description="In Ref. 2; AAC41447." evidence="2" ref="2">
    <original>S</original>
    <variation>P</variation>
    <location>
        <position position="486"/>
    </location>
</feature>
<feature type="sequence conflict" description="In Ref. 2; AAC41447." evidence="2" ref="2">
    <original>VRCEKCGGE</original>
    <variation>LDVKNVEGQ</variation>
    <location>
        <begin position="504"/>
        <end position="512"/>
    </location>
</feature>
<feature type="sequence conflict" description="In Ref. 2." evidence="2" ref="2">
    <original>RDTLRLWLLRNTTWEDAKFSWKS</original>
    <variation>QRYVKIMVTLEIPHGKMSKSHGN</variation>
    <location>
        <begin position="614"/>
        <end position="636"/>
    </location>
</feature>
<name>SYI_SULAC</name>